<dbReference type="EMBL" id="AM295007">
    <property type="protein sequence ID" value="CAM31135.1"/>
    <property type="molecule type" value="Genomic_DNA"/>
</dbReference>
<dbReference type="RefSeq" id="WP_002982082.1">
    <property type="nucleotide sequence ID" value="NC_009332.1"/>
</dbReference>
<dbReference type="SMR" id="A2RH03"/>
<dbReference type="KEGG" id="spf:SpyM51810"/>
<dbReference type="HOGENOM" id="CLU_007831_2_2_9"/>
<dbReference type="GO" id="GO:0005829">
    <property type="term" value="C:cytosol"/>
    <property type="evidence" value="ECO:0007669"/>
    <property type="project" value="TreeGrafter"/>
</dbReference>
<dbReference type="GO" id="GO:0050660">
    <property type="term" value="F:flavin adenine dinucleotide binding"/>
    <property type="evidence" value="ECO:0007669"/>
    <property type="project" value="UniProtKB-UniRule"/>
</dbReference>
<dbReference type="GO" id="GO:0030488">
    <property type="term" value="P:tRNA methylation"/>
    <property type="evidence" value="ECO:0007669"/>
    <property type="project" value="TreeGrafter"/>
</dbReference>
<dbReference type="GO" id="GO:0002098">
    <property type="term" value="P:tRNA wobble uridine modification"/>
    <property type="evidence" value="ECO:0007669"/>
    <property type="project" value="InterPro"/>
</dbReference>
<dbReference type="FunFam" id="1.10.10.1800:FF:000001">
    <property type="entry name" value="tRNA uridine 5-carboxymethylaminomethyl modification enzyme MnmG"/>
    <property type="match status" value="1"/>
</dbReference>
<dbReference type="FunFam" id="1.10.150.570:FF:000001">
    <property type="entry name" value="tRNA uridine 5-carboxymethylaminomethyl modification enzyme MnmG"/>
    <property type="match status" value="1"/>
</dbReference>
<dbReference type="FunFam" id="3.50.50.60:FF:000002">
    <property type="entry name" value="tRNA uridine 5-carboxymethylaminomethyl modification enzyme MnmG"/>
    <property type="match status" value="1"/>
</dbReference>
<dbReference type="FunFam" id="3.50.50.60:FF:000063">
    <property type="entry name" value="tRNA uridine 5-carboxymethylaminomethyl modification enzyme MnmG"/>
    <property type="match status" value="1"/>
</dbReference>
<dbReference type="Gene3D" id="3.50.50.60">
    <property type="entry name" value="FAD/NAD(P)-binding domain"/>
    <property type="match status" value="2"/>
</dbReference>
<dbReference type="Gene3D" id="1.10.150.570">
    <property type="entry name" value="GidA associated domain, C-terminal subdomain"/>
    <property type="match status" value="1"/>
</dbReference>
<dbReference type="Gene3D" id="1.10.10.1800">
    <property type="entry name" value="tRNA uridine 5-carboxymethylaminomethyl modification enzyme MnmG/GidA"/>
    <property type="match status" value="1"/>
</dbReference>
<dbReference type="HAMAP" id="MF_00129">
    <property type="entry name" value="MnmG_GidA"/>
    <property type="match status" value="1"/>
</dbReference>
<dbReference type="InterPro" id="IPR036188">
    <property type="entry name" value="FAD/NAD-bd_sf"/>
</dbReference>
<dbReference type="InterPro" id="IPR049312">
    <property type="entry name" value="GIDA_C_N"/>
</dbReference>
<dbReference type="InterPro" id="IPR004416">
    <property type="entry name" value="MnmG"/>
</dbReference>
<dbReference type="InterPro" id="IPR002218">
    <property type="entry name" value="MnmG-rel"/>
</dbReference>
<dbReference type="InterPro" id="IPR020595">
    <property type="entry name" value="MnmG-rel_CS"/>
</dbReference>
<dbReference type="InterPro" id="IPR026904">
    <property type="entry name" value="MnmG_C"/>
</dbReference>
<dbReference type="InterPro" id="IPR047001">
    <property type="entry name" value="MnmG_C_subdom"/>
</dbReference>
<dbReference type="InterPro" id="IPR044920">
    <property type="entry name" value="MnmG_C_subdom_sf"/>
</dbReference>
<dbReference type="InterPro" id="IPR040131">
    <property type="entry name" value="MnmG_N"/>
</dbReference>
<dbReference type="NCBIfam" id="TIGR00136">
    <property type="entry name" value="mnmG_gidA"/>
    <property type="match status" value="1"/>
</dbReference>
<dbReference type="PANTHER" id="PTHR11806">
    <property type="entry name" value="GLUCOSE INHIBITED DIVISION PROTEIN A"/>
    <property type="match status" value="1"/>
</dbReference>
<dbReference type="PANTHER" id="PTHR11806:SF0">
    <property type="entry name" value="PROTEIN MTO1 HOMOLOG, MITOCHONDRIAL"/>
    <property type="match status" value="1"/>
</dbReference>
<dbReference type="Pfam" id="PF01134">
    <property type="entry name" value="GIDA"/>
    <property type="match status" value="1"/>
</dbReference>
<dbReference type="Pfam" id="PF21680">
    <property type="entry name" value="GIDA_C_1st"/>
    <property type="match status" value="1"/>
</dbReference>
<dbReference type="Pfam" id="PF13932">
    <property type="entry name" value="SAM_GIDA_C"/>
    <property type="match status" value="1"/>
</dbReference>
<dbReference type="PRINTS" id="PR00411">
    <property type="entry name" value="PNDRDTASEI"/>
</dbReference>
<dbReference type="SMART" id="SM01228">
    <property type="entry name" value="GIDA_assoc_3"/>
    <property type="match status" value="1"/>
</dbReference>
<dbReference type="SUPFAM" id="SSF51905">
    <property type="entry name" value="FAD/NAD(P)-binding domain"/>
    <property type="match status" value="1"/>
</dbReference>
<dbReference type="PROSITE" id="PS01280">
    <property type="entry name" value="GIDA_1"/>
    <property type="match status" value="1"/>
</dbReference>
<dbReference type="PROSITE" id="PS01281">
    <property type="entry name" value="GIDA_2"/>
    <property type="match status" value="1"/>
</dbReference>
<gene>
    <name evidence="1" type="primary">mnmG</name>
    <name evidence="1" type="synonym">gidA</name>
    <name type="ordered locus">SpyM51810</name>
</gene>
<sequence length="632" mass="70127">MTHEFTESYDVIVIGAGHAGVEASLATSRMGCKTLLATINLDMLAFMPCNPSIGGSAKGIVVREIDALGGEMGKNIDKTYIQMKMLNTGKGPAVRALRAQADKSLYAREMKHTVEKQANLTLRQTMIDDILVEDGRVVGVLTATGQKFAAKAVVVTTGTALRGEIILGELKYSSGPNNSLASVTLADNLKKLGLEIGRFKTGTPPRVKASSINYDQTEIQPGDDKPNHFSFMSKDADYLKDQIPCWLTYTNQTSHDIINQNLYRAPMFSGIVKGVGPRYCPSIEDKIVRFADKERHQLFLEPEGRDTEEVYVQGLSTSLPEDVQKDLIHSIKGLEKAEMMRTGYAIEYDIVLPHQLRATLETKLISGLFTAGQTNGTSGYEEAAGQGLIAGINAALKVQGKPELILKRSDAYIGVMIDDLVTKGTLEPYRLLTSRAEYRLILRHDNADMRLTEIGRDIGLVDDERWKAFEIKKNQFDNELKRLNSIKLKPVKATNDRVQELGFKPLTDAMTAKEFMRRPEIDYATAVSFVGPAAEDLDAKIIELLETEIKYEGYIRKALDQVAKMKRMEEKRIPANIDWDAIDSIATEARQKFKKINPETIGQASRISGVNPADISILMIYLEGNGKAHRKY</sequence>
<accession>A2RH03</accession>
<comment type="function">
    <text evidence="1">NAD-binding protein involved in the addition of a carboxymethylaminomethyl (cmnm) group at the wobble position (U34) of certain tRNAs, forming tRNA-cmnm(5)s(2)U34.</text>
</comment>
<comment type="cofactor">
    <cofactor evidence="1">
        <name>FAD</name>
        <dbReference type="ChEBI" id="CHEBI:57692"/>
    </cofactor>
</comment>
<comment type="subunit">
    <text evidence="1">Homodimer. Heterotetramer of two MnmE and two MnmG subunits.</text>
</comment>
<comment type="subcellular location">
    <subcellularLocation>
        <location evidence="1">Cytoplasm</location>
    </subcellularLocation>
</comment>
<comment type="similarity">
    <text evidence="1">Belongs to the MnmG family.</text>
</comment>
<feature type="chain" id="PRO_1000016693" description="tRNA uridine 5-carboxymethylaminomethyl modification enzyme MnmG">
    <location>
        <begin position="1"/>
        <end position="632"/>
    </location>
</feature>
<feature type="binding site" evidence="1">
    <location>
        <begin position="15"/>
        <end position="20"/>
    </location>
    <ligand>
        <name>FAD</name>
        <dbReference type="ChEBI" id="CHEBI:57692"/>
    </ligand>
</feature>
<feature type="binding site" evidence="1">
    <location>
        <position position="127"/>
    </location>
    <ligand>
        <name>FAD</name>
        <dbReference type="ChEBI" id="CHEBI:57692"/>
    </ligand>
</feature>
<feature type="binding site" evidence="1">
    <location>
        <position position="182"/>
    </location>
    <ligand>
        <name>FAD</name>
        <dbReference type="ChEBI" id="CHEBI:57692"/>
    </ligand>
</feature>
<feature type="binding site" evidence="1">
    <location>
        <begin position="276"/>
        <end position="290"/>
    </location>
    <ligand>
        <name>NAD(+)</name>
        <dbReference type="ChEBI" id="CHEBI:57540"/>
    </ligand>
</feature>
<feature type="binding site" evidence="1">
    <location>
        <position position="373"/>
    </location>
    <ligand>
        <name>FAD</name>
        <dbReference type="ChEBI" id="CHEBI:57692"/>
    </ligand>
</feature>
<proteinExistence type="inferred from homology"/>
<evidence type="ECO:0000255" key="1">
    <source>
        <dbReference type="HAMAP-Rule" id="MF_00129"/>
    </source>
</evidence>
<name>MNMG_STRPG</name>
<keyword id="KW-0963">Cytoplasm</keyword>
<keyword id="KW-0274">FAD</keyword>
<keyword id="KW-0285">Flavoprotein</keyword>
<keyword id="KW-0520">NAD</keyword>
<keyword id="KW-0819">tRNA processing</keyword>
<protein>
    <recommendedName>
        <fullName evidence="1">tRNA uridine 5-carboxymethylaminomethyl modification enzyme MnmG</fullName>
    </recommendedName>
    <alternativeName>
        <fullName evidence="1">Glucose-inhibited division protein A</fullName>
    </alternativeName>
</protein>
<reference key="1">
    <citation type="journal article" date="2007" name="J. Bacteriol.">
        <title>Complete genome of acute rheumatic fever-associated serotype M5 Streptococcus pyogenes strain Manfredo.</title>
        <authorList>
            <person name="Holden M.T.G."/>
            <person name="Scott A."/>
            <person name="Cherevach I."/>
            <person name="Chillingworth T."/>
            <person name="Churcher C."/>
            <person name="Cronin A."/>
            <person name="Dowd L."/>
            <person name="Feltwell T."/>
            <person name="Hamlin N."/>
            <person name="Holroyd S."/>
            <person name="Jagels K."/>
            <person name="Moule S."/>
            <person name="Mungall K."/>
            <person name="Quail M.A."/>
            <person name="Price C."/>
            <person name="Rabbinowitsch E."/>
            <person name="Sharp S."/>
            <person name="Skelton J."/>
            <person name="Whitehead S."/>
            <person name="Barrell B.G."/>
            <person name="Kehoe M."/>
            <person name="Parkhill J."/>
        </authorList>
    </citation>
    <scope>NUCLEOTIDE SEQUENCE [LARGE SCALE GENOMIC DNA]</scope>
    <source>
        <strain>Manfredo</strain>
    </source>
</reference>
<organism>
    <name type="scientific">Streptococcus pyogenes serotype M5 (strain Manfredo)</name>
    <dbReference type="NCBI Taxonomy" id="160491"/>
    <lineage>
        <taxon>Bacteria</taxon>
        <taxon>Bacillati</taxon>
        <taxon>Bacillota</taxon>
        <taxon>Bacilli</taxon>
        <taxon>Lactobacillales</taxon>
        <taxon>Streptococcaceae</taxon>
        <taxon>Streptococcus</taxon>
    </lineage>
</organism>